<reference key="1">
    <citation type="journal article" date="1995" name="Plant Mol. Biol. Rep.">
        <title>Complete nucleotide sequence of the Porphyra purpurea chloroplast genome.</title>
        <authorList>
            <person name="Reith M.E."/>
            <person name="Munholland J."/>
        </authorList>
    </citation>
    <scope>NUCLEOTIDE SEQUENCE [LARGE SCALE GENOMIC DNA]</scope>
    <source>
        <strain>Avonport</strain>
    </source>
</reference>
<geneLocation type="chloroplast"/>
<protein>
    <recommendedName>
        <fullName evidence="1">Large ribosomal subunit protein bL33c</fullName>
    </recommendedName>
    <alternativeName>
        <fullName>50S ribosomal protein L33, chloroplastic</fullName>
    </alternativeName>
</protein>
<accession>P51255</accession>
<keyword id="KW-0150">Chloroplast</keyword>
<keyword id="KW-0934">Plastid</keyword>
<keyword id="KW-0687">Ribonucleoprotein</keyword>
<keyword id="KW-0689">Ribosomal protein</keyword>
<gene>
    <name type="primary">rpl33</name>
</gene>
<proteinExistence type="inferred from homology"/>
<name>RK33_PORPU</name>
<sequence length="65" mass="7432">MAKSKGARIVITLECSNKSVDISQKRKAGVFRYTTTKNRRNTPGRIELKKFCPNCNSHCVFKEIK</sequence>
<evidence type="ECO:0000305" key="1"/>
<feature type="chain" id="PRO_0000170299" description="Large ribosomal subunit protein bL33c">
    <location>
        <begin position="1"/>
        <end position="65"/>
    </location>
</feature>
<comment type="subcellular location">
    <subcellularLocation>
        <location>Plastid</location>
        <location>Chloroplast</location>
    </subcellularLocation>
</comment>
<comment type="similarity">
    <text evidence="1">Belongs to the bacterial ribosomal protein bL33 family.</text>
</comment>
<dbReference type="EMBL" id="U38804">
    <property type="protein sequence ID" value="AAC08141.1"/>
    <property type="molecule type" value="Genomic_DNA"/>
</dbReference>
<dbReference type="PIR" id="S73176">
    <property type="entry name" value="S73176"/>
</dbReference>
<dbReference type="RefSeq" id="NP_053865.1">
    <property type="nucleotide sequence ID" value="NC_000925.1"/>
</dbReference>
<dbReference type="SMR" id="P51255"/>
<dbReference type="GeneID" id="809884"/>
<dbReference type="GO" id="GO:0009507">
    <property type="term" value="C:chloroplast"/>
    <property type="evidence" value="ECO:0007669"/>
    <property type="project" value="UniProtKB-SubCell"/>
</dbReference>
<dbReference type="GO" id="GO:1990904">
    <property type="term" value="C:ribonucleoprotein complex"/>
    <property type="evidence" value="ECO:0007669"/>
    <property type="project" value="UniProtKB-KW"/>
</dbReference>
<dbReference type="GO" id="GO:0005840">
    <property type="term" value="C:ribosome"/>
    <property type="evidence" value="ECO:0007669"/>
    <property type="project" value="UniProtKB-KW"/>
</dbReference>
<dbReference type="GO" id="GO:0003735">
    <property type="term" value="F:structural constituent of ribosome"/>
    <property type="evidence" value="ECO:0007669"/>
    <property type="project" value="InterPro"/>
</dbReference>
<dbReference type="GO" id="GO:0006412">
    <property type="term" value="P:translation"/>
    <property type="evidence" value="ECO:0007669"/>
    <property type="project" value="UniProtKB-UniRule"/>
</dbReference>
<dbReference type="Gene3D" id="2.20.28.120">
    <property type="entry name" value="Ribosomal protein L33"/>
    <property type="match status" value="1"/>
</dbReference>
<dbReference type="HAMAP" id="MF_00294">
    <property type="entry name" value="Ribosomal_bL33"/>
    <property type="match status" value="1"/>
</dbReference>
<dbReference type="InterPro" id="IPR001705">
    <property type="entry name" value="Ribosomal_bL33"/>
</dbReference>
<dbReference type="InterPro" id="IPR018264">
    <property type="entry name" value="Ribosomal_bL33_CS"/>
</dbReference>
<dbReference type="InterPro" id="IPR038584">
    <property type="entry name" value="Ribosomal_bL33_sf"/>
</dbReference>
<dbReference type="InterPro" id="IPR011332">
    <property type="entry name" value="Ribosomal_zn-bd"/>
</dbReference>
<dbReference type="NCBIfam" id="NF001764">
    <property type="entry name" value="PRK00504.1"/>
    <property type="match status" value="1"/>
</dbReference>
<dbReference type="NCBIfam" id="NF001860">
    <property type="entry name" value="PRK00595.1"/>
    <property type="match status" value="1"/>
</dbReference>
<dbReference type="NCBIfam" id="TIGR01023">
    <property type="entry name" value="rpmG_bact"/>
    <property type="match status" value="1"/>
</dbReference>
<dbReference type="PANTHER" id="PTHR43168">
    <property type="entry name" value="50S RIBOSOMAL PROTEIN L33, CHLOROPLASTIC"/>
    <property type="match status" value="1"/>
</dbReference>
<dbReference type="PANTHER" id="PTHR43168:SF2">
    <property type="entry name" value="LARGE RIBOSOMAL SUBUNIT PROTEIN BL33C"/>
    <property type="match status" value="1"/>
</dbReference>
<dbReference type="Pfam" id="PF00471">
    <property type="entry name" value="Ribosomal_L33"/>
    <property type="match status" value="1"/>
</dbReference>
<dbReference type="SUPFAM" id="SSF57829">
    <property type="entry name" value="Zn-binding ribosomal proteins"/>
    <property type="match status" value="1"/>
</dbReference>
<dbReference type="PROSITE" id="PS00582">
    <property type="entry name" value="RIBOSOMAL_L33"/>
    <property type="match status" value="1"/>
</dbReference>
<organism>
    <name type="scientific">Porphyra purpurea</name>
    <name type="common">Red seaweed</name>
    <name type="synonym">Ulva purpurea</name>
    <dbReference type="NCBI Taxonomy" id="2787"/>
    <lineage>
        <taxon>Eukaryota</taxon>
        <taxon>Rhodophyta</taxon>
        <taxon>Bangiophyceae</taxon>
        <taxon>Bangiales</taxon>
        <taxon>Bangiaceae</taxon>
        <taxon>Porphyra</taxon>
    </lineage>
</organism>